<sequence>MRIEVTIAKTSPLPAGAIDALAGELSRRIQYAFPDNEGHVSVRYAAANNLSVIGATKEDKQRISEILQETWESADDWFVSE</sequence>
<protein>
    <recommendedName>
        <fullName>DNA damage-inducible protein I</fullName>
    </recommendedName>
</protein>
<organism>
    <name type="scientific">Escherichia coli O6:H1 (strain CFT073 / ATCC 700928 / UPEC)</name>
    <dbReference type="NCBI Taxonomy" id="199310"/>
    <lineage>
        <taxon>Bacteria</taxon>
        <taxon>Pseudomonadati</taxon>
        <taxon>Pseudomonadota</taxon>
        <taxon>Gammaproteobacteria</taxon>
        <taxon>Enterobacterales</taxon>
        <taxon>Enterobacteriaceae</taxon>
        <taxon>Escherichia</taxon>
    </lineage>
</organism>
<name>DINI_ECOL6</name>
<dbReference type="EMBL" id="AE014075">
    <property type="protein sequence ID" value="AAN79801.1"/>
    <property type="status" value="ALT_INIT"/>
    <property type="molecule type" value="Genomic_DNA"/>
</dbReference>
<dbReference type="RefSeq" id="WP_001217754.1">
    <property type="nucleotide sequence ID" value="NZ_CP051263.1"/>
</dbReference>
<dbReference type="SMR" id="P0ABR2"/>
<dbReference type="STRING" id="199310.c1328"/>
<dbReference type="GeneID" id="93776346"/>
<dbReference type="KEGG" id="ecc:c1328"/>
<dbReference type="eggNOG" id="ENOG5032TF2">
    <property type="taxonomic scope" value="Bacteria"/>
</dbReference>
<dbReference type="HOGENOM" id="CLU_139795_1_0_6"/>
<dbReference type="Proteomes" id="UP000001410">
    <property type="component" value="Chromosome"/>
</dbReference>
<dbReference type="GO" id="GO:0006281">
    <property type="term" value="P:DNA repair"/>
    <property type="evidence" value="ECO:0007669"/>
    <property type="project" value="UniProtKB-KW"/>
</dbReference>
<dbReference type="GO" id="GO:0009432">
    <property type="term" value="P:SOS response"/>
    <property type="evidence" value="ECO:0007669"/>
    <property type="project" value="UniProtKB-KW"/>
</dbReference>
<dbReference type="FunFam" id="3.30.910.10:FF:000001">
    <property type="entry name" value="DNA damage-inducible protein I"/>
    <property type="match status" value="1"/>
</dbReference>
<dbReference type="Gene3D" id="3.30.910.10">
    <property type="entry name" value="DinI-like"/>
    <property type="match status" value="1"/>
</dbReference>
<dbReference type="InterPro" id="IPR036687">
    <property type="entry name" value="DinI-like_sf"/>
</dbReference>
<dbReference type="InterPro" id="IPR010391">
    <property type="entry name" value="DNA_damage-inducible_DinI-like"/>
</dbReference>
<dbReference type="NCBIfam" id="NF007893">
    <property type="entry name" value="PRK10597.1"/>
    <property type="match status" value="1"/>
</dbReference>
<dbReference type="PANTHER" id="PTHR36572:SF2">
    <property type="entry name" value="DNA DAMAGE-INDUCIBLE PROTEIN I"/>
    <property type="match status" value="1"/>
</dbReference>
<dbReference type="PANTHER" id="PTHR36572">
    <property type="entry name" value="DNA DAMAGE-INDUCIBLE PROTEIN I-RELATED"/>
    <property type="match status" value="1"/>
</dbReference>
<dbReference type="Pfam" id="PF06183">
    <property type="entry name" value="DinI"/>
    <property type="match status" value="1"/>
</dbReference>
<dbReference type="SUPFAM" id="SSF54857">
    <property type="entry name" value="DNA damage-inducible protein DinI"/>
    <property type="match status" value="1"/>
</dbReference>
<reference key="1">
    <citation type="journal article" date="2002" name="Proc. Natl. Acad. Sci. U.S.A.">
        <title>Extensive mosaic structure revealed by the complete genome sequence of uropathogenic Escherichia coli.</title>
        <authorList>
            <person name="Welch R.A."/>
            <person name="Burland V."/>
            <person name="Plunkett G. III"/>
            <person name="Redford P."/>
            <person name="Roesch P."/>
            <person name="Rasko D."/>
            <person name="Buckles E.L."/>
            <person name="Liou S.-R."/>
            <person name="Boutin A."/>
            <person name="Hackett J."/>
            <person name="Stroud D."/>
            <person name="Mayhew G.F."/>
            <person name="Rose D.J."/>
            <person name="Zhou S."/>
            <person name="Schwartz D.C."/>
            <person name="Perna N.T."/>
            <person name="Mobley H.L.T."/>
            <person name="Donnenberg M.S."/>
            <person name="Blattner F.R."/>
        </authorList>
    </citation>
    <scope>NUCLEOTIDE SEQUENCE [LARGE SCALE GENOMIC DNA]</scope>
    <source>
        <strain>CFT073 / ATCC 700928 / UPEC</strain>
    </source>
</reference>
<evidence type="ECO:0000250" key="1"/>
<evidence type="ECO:0000305" key="2"/>
<feature type="chain" id="PRO_0000201637" description="DNA damage-inducible protein I">
    <location>
        <begin position="1"/>
        <end position="81"/>
    </location>
</feature>
<gene>
    <name type="primary">dinI</name>
    <name type="ordered locus">c1328</name>
</gene>
<accession>P0ABR2</accession>
<accession>Q47143</accession>
<accession>Q9R2Y7</accession>
<proteinExistence type="inferred from homology"/>
<comment type="function">
    <text evidence="1">Involved in SOS regulation. Inhibits RecA by preventing RecA to bind ssDNA. Can displace ssDNA from RecA (By similarity).</text>
</comment>
<comment type="similarity">
    <text evidence="2">Belongs to the DinI family.</text>
</comment>
<comment type="sequence caution" evidence="2">
    <conflict type="erroneous initiation">
        <sequence resource="EMBL-CDS" id="AAN79801"/>
    </conflict>
</comment>
<keyword id="KW-0227">DNA damage</keyword>
<keyword id="KW-0234">DNA repair</keyword>
<keyword id="KW-1185">Reference proteome</keyword>
<keyword id="KW-0742">SOS response</keyword>